<feature type="propeptide" id="PRO_0000316071" evidence="1">
    <location>
        <begin position="1"/>
        <end position="7"/>
    </location>
</feature>
<feature type="chain" id="PRO_1000051610" description="Germination protease">
    <location>
        <begin position="8"/>
        <end position="325"/>
    </location>
</feature>
<name>GPR_CLOP1</name>
<sequence>MYNVRTDLAVESREIYKHRYNREIDGVVFEEKTVEEDIKVTNVDILNEEGAKAMGKPIGRYVTIDIPEYTHYDGGIMDEVSHVVAASLEELINLPEERTALVVGLGNWNVTPDAIGPKVVGKLMVTRHLKKVMPDIIDDSVRPVCAIAPGVLGITGIETGEIIKSLVEKINPDLVVCIDALASRKLERVARTIQISNTGISPGAGVGNHRMQINEESLGIPVIALGVPTVVDAATIANDAMDLVLDEMINQADAGKEFYNILNNIDKNEKGMMIKSLLDPYVGDLMVTPKEIDDIIESVSKIIANGINIALQPNMVLEDINKFLN</sequence>
<keyword id="KW-0378">Hydrolase</keyword>
<keyword id="KW-0645">Protease</keyword>
<keyword id="KW-0865">Zymogen</keyword>
<protein>
    <recommendedName>
        <fullName evidence="1">Germination protease</fullName>
        <ecNumber evidence="1">3.4.24.78</ecNumber>
    </recommendedName>
    <alternativeName>
        <fullName evidence="1">GPR endopeptidase</fullName>
    </alternativeName>
    <alternativeName>
        <fullName evidence="1">Germination proteinase</fullName>
    </alternativeName>
    <alternativeName>
        <fullName evidence="1">Spore protease</fullName>
    </alternativeName>
</protein>
<reference key="1">
    <citation type="journal article" date="2006" name="Genome Res.">
        <title>Skewed genomic variability in strains of the toxigenic bacterial pathogen, Clostridium perfringens.</title>
        <authorList>
            <person name="Myers G.S.A."/>
            <person name="Rasko D.A."/>
            <person name="Cheung J.K."/>
            <person name="Ravel J."/>
            <person name="Seshadri R."/>
            <person name="DeBoy R.T."/>
            <person name="Ren Q."/>
            <person name="Varga J."/>
            <person name="Awad M.M."/>
            <person name="Brinkac L.M."/>
            <person name="Daugherty S.C."/>
            <person name="Haft D.H."/>
            <person name="Dodson R.J."/>
            <person name="Madupu R."/>
            <person name="Nelson W.C."/>
            <person name="Rosovitz M.J."/>
            <person name="Sullivan S.A."/>
            <person name="Khouri H."/>
            <person name="Dimitrov G.I."/>
            <person name="Watkins K.L."/>
            <person name="Mulligan S."/>
            <person name="Benton J."/>
            <person name="Radune D."/>
            <person name="Fisher D.J."/>
            <person name="Atkins H.S."/>
            <person name="Hiscox T."/>
            <person name="Jost B.H."/>
            <person name="Billington S.J."/>
            <person name="Songer J.G."/>
            <person name="McClane B.A."/>
            <person name="Titball R.W."/>
            <person name="Rood J.I."/>
            <person name="Melville S.B."/>
            <person name="Paulsen I.T."/>
        </authorList>
    </citation>
    <scope>NUCLEOTIDE SEQUENCE [LARGE SCALE GENOMIC DNA]</scope>
    <source>
        <strain>ATCC 13124 / DSM 756 / JCM 1290 / NCIMB 6125 / NCTC 8237 / S 107 / Type A</strain>
    </source>
</reference>
<evidence type="ECO:0000255" key="1">
    <source>
        <dbReference type="HAMAP-Rule" id="MF_00626"/>
    </source>
</evidence>
<proteinExistence type="inferred from homology"/>
<dbReference type="EC" id="3.4.24.78" evidence="1"/>
<dbReference type="EMBL" id="CP000246">
    <property type="protein sequence ID" value="ABG84499.1"/>
    <property type="molecule type" value="Genomic_DNA"/>
</dbReference>
<dbReference type="RefSeq" id="WP_003455049.1">
    <property type="nucleotide sequence ID" value="NC_008261.1"/>
</dbReference>
<dbReference type="SMR" id="Q0TNR9"/>
<dbReference type="STRING" id="195103.CPF_2298"/>
<dbReference type="MEROPS" id="A25.001"/>
<dbReference type="PaxDb" id="195103-CPF_2298"/>
<dbReference type="KEGG" id="cpf:CPF_2298"/>
<dbReference type="eggNOG" id="COG0680">
    <property type="taxonomic scope" value="Bacteria"/>
</dbReference>
<dbReference type="HOGENOM" id="CLU_055087_1_0_9"/>
<dbReference type="Proteomes" id="UP000001823">
    <property type="component" value="Chromosome"/>
</dbReference>
<dbReference type="GO" id="GO:0004222">
    <property type="term" value="F:metalloendopeptidase activity"/>
    <property type="evidence" value="ECO:0007669"/>
    <property type="project" value="UniProtKB-UniRule"/>
</dbReference>
<dbReference type="GO" id="GO:0006508">
    <property type="term" value="P:proteolysis"/>
    <property type="evidence" value="ECO:0007669"/>
    <property type="project" value="UniProtKB-UniRule"/>
</dbReference>
<dbReference type="GO" id="GO:0009847">
    <property type="term" value="P:spore germination"/>
    <property type="evidence" value="ECO:0007669"/>
    <property type="project" value="UniProtKB-UniRule"/>
</dbReference>
<dbReference type="Gene3D" id="3.40.50.1450">
    <property type="entry name" value="HybD-like"/>
    <property type="match status" value="1"/>
</dbReference>
<dbReference type="HAMAP" id="MF_00626">
    <property type="entry name" value="Germination_prot"/>
    <property type="match status" value="1"/>
</dbReference>
<dbReference type="InterPro" id="IPR023430">
    <property type="entry name" value="Pept_HybD-like_dom_sf"/>
</dbReference>
<dbReference type="InterPro" id="IPR005080">
    <property type="entry name" value="Peptidase_A25"/>
</dbReference>
<dbReference type="NCBIfam" id="TIGR01441">
    <property type="entry name" value="GPR"/>
    <property type="match status" value="1"/>
</dbReference>
<dbReference type="Pfam" id="PF03418">
    <property type="entry name" value="Peptidase_A25"/>
    <property type="match status" value="2"/>
</dbReference>
<dbReference type="PIRSF" id="PIRSF019549">
    <property type="entry name" value="Peptidase_A25"/>
    <property type="match status" value="1"/>
</dbReference>
<dbReference type="SUPFAM" id="SSF53163">
    <property type="entry name" value="HybD-like"/>
    <property type="match status" value="1"/>
</dbReference>
<comment type="function">
    <text evidence="1">Initiates the rapid degradation of small, acid-soluble proteins during spore germination.</text>
</comment>
<comment type="catalytic activity">
    <reaction evidence="1">
        <text>Endopeptidase action with P4 Glu or Asp, P1 preferably Glu &gt; Asp, P1' hydrophobic and P2' Ala.</text>
        <dbReference type="EC" id="3.4.24.78"/>
    </reaction>
</comment>
<comment type="subunit">
    <text evidence="1">Homotetramer.</text>
</comment>
<comment type="PTM">
    <text evidence="1">Autoproteolytically processed. The inactive tetrameric zymogen termed p46 autoprocesses to a smaller form termed p41, which is active only during spore germination.</text>
</comment>
<comment type="similarity">
    <text evidence="1">Belongs to the peptidase A25 family.</text>
</comment>
<gene>
    <name evidence="1" type="primary">gpr</name>
    <name type="ordered locus">CPF_2298</name>
</gene>
<organism>
    <name type="scientific">Clostridium perfringens (strain ATCC 13124 / DSM 756 / JCM 1290 / NCIMB 6125 / NCTC 8237 / Type A)</name>
    <dbReference type="NCBI Taxonomy" id="195103"/>
    <lineage>
        <taxon>Bacteria</taxon>
        <taxon>Bacillati</taxon>
        <taxon>Bacillota</taxon>
        <taxon>Clostridia</taxon>
        <taxon>Eubacteriales</taxon>
        <taxon>Clostridiaceae</taxon>
        <taxon>Clostridium</taxon>
    </lineage>
</organism>
<accession>Q0TNR9</accession>